<name>AROC_XANP2</name>
<keyword id="KW-0028">Amino-acid biosynthesis</keyword>
<keyword id="KW-0057">Aromatic amino acid biosynthesis</keyword>
<keyword id="KW-0274">FAD</keyword>
<keyword id="KW-0285">Flavoprotein</keyword>
<keyword id="KW-0288">FMN</keyword>
<keyword id="KW-0456">Lyase</keyword>
<keyword id="KW-0521">NADP</keyword>
<keyword id="KW-1185">Reference proteome</keyword>
<accession>A7IMW7</accession>
<evidence type="ECO:0000255" key="1">
    <source>
        <dbReference type="HAMAP-Rule" id="MF_00300"/>
    </source>
</evidence>
<protein>
    <recommendedName>
        <fullName evidence="1">Chorismate synthase</fullName>
        <shortName evidence="1">CS</shortName>
        <ecNumber evidence="1">4.2.3.5</ecNumber>
    </recommendedName>
    <alternativeName>
        <fullName evidence="1">5-enolpyruvylshikimate-3-phosphate phospholyase</fullName>
    </alternativeName>
</protein>
<comment type="function">
    <text evidence="1">Catalyzes the anti-1,4-elimination of the C-3 phosphate and the C-6 proR hydrogen from 5-enolpyruvylshikimate-3-phosphate (EPSP) to yield chorismate, which is the branch point compound that serves as the starting substrate for the three terminal pathways of aromatic amino acid biosynthesis. This reaction introduces a second double bond into the aromatic ring system.</text>
</comment>
<comment type="catalytic activity">
    <reaction evidence="1">
        <text>5-O-(1-carboxyvinyl)-3-phosphoshikimate = chorismate + phosphate</text>
        <dbReference type="Rhea" id="RHEA:21020"/>
        <dbReference type="ChEBI" id="CHEBI:29748"/>
        <dbReference type="ChEBI" id="CHEBI:43474"/>
        <dbReference type="ChEBI" id="CHEBI:57701"/>
        <dbReference type="EC" id="4.2.3.5"/>
    </reaction>
</comment>
<comment type="cofactor">
    <cofactor evidence="1">
        <name>FMNH2</name>
        <dbReference type="ChEBI" id="CHEBI:57618"/>
    </cofactor>
    <text evidence="1">Reduced FMN (FMNH(2)).</text>
</comment>
<comment type="pathway">
    <text evidence="1">Metabolic intermediate biosynthesis; chorismate biosynthesis; chorismate from D-erythrose 4-phosphate and phosphoenolpyruvate: step 7/7.</text>
</comment>
<comment type="subunit">
    <text evidence="1">Homotetramer.</text>
</comment>
<comment type="similarity">
    <text evidence="1">Belongs to the chorismate synthase family.</text>
</comment>
<sequence>MSFNTFGHLFRVTTFGESHGAAIGCVVDGCPPNLRFTLEDVQAALDRRRPGQSRFTTQRREPDQVKVLSGTLEHPEGGLVTTGTPIALLIENVDQRSKDYADIAGAYRPGHADFTYDIKYGIRDHRGGGRSSARETATRVAAGAIAAKVLPGVTVRGAVVRIGEIEIDRSRWDWNEVPNNPFFCPDPKTVPLWEEYLDAVRKAGSSIGAVVELVAEGVPAGLGAPLYGKLDADLASALLGINAAKGVEIGEGFNAAQLTGEENADEMRLGNEGRPQFLSNHAGGILGGIATGAPIVARFALKPTSSILTPRQTVDRTGQETEIFTKGRHDPCVGIRAVPVGEAMMWCVLADHFLRHRGQVGESVAWPFKG</sequence>
<organism>
    <name type="scientific">Xanthobacter autotrophicus (strain ATCC BAA-1158 / Py2)</name>
    <dbReference type="NCBI Taxonomy" id="78245"/>
    <lineage>
        <taxon>Bacteria</taxon>
        <taxon>Pseudomonadati</taxon>
        <taxon>Pseudomonadota</taxon>
        <taxon>Alphaproteobacteria</taxon>
        <taxon>Hyphomicrobiales</taxon>
        <taxon>Xanthobacteraceae</taxon>
        <taxon>Xanthobacter</taxon>
    </lineage>
</organism>
<reference key="1">
    <citation type="submission" date="2007-07" db="EMBL/GenBank/DDBJ databases">
        <title>Complete sequence of chromosome of Xanthobacter autotrophicus Py2.</title>
        <authorList>
            <consortium name="US DOE Joint Genome Institute"/>
            <person name="Copeland A."/>
            <person name="Lucas S."/>
            <person name="Lapidus A."/>
            <person name="Barry K."/>
            <person name="Glavina del Rio T."/>
            <person name="Hammon N."/>
            <person name="Israni S."/>
            <person name="Dalin E."/>
            <person name="Tice H."/>
            <person name="Pitluck S."/>
            <person name="Sims D."/>
            <person name="Brettin T."/>
            <person name="Bruce D."/>
            <person name="Detter J.C."/>
            <person name="Han C."/>
            <person name="Tapia R."/>
            <person name="Brainard J."/>
            <person name="Schmutz J."/>
            <person name="Larimer F."/>
            <person name="Land M."/>
            <person name="Hauser L."/>
            <person name="Kyrpides N."/>
            <person name="Kim E."/>
            <person name="Ensigns S.A."/>
            <person name="Richardson P."/>
        </authorList>
    </citation>
    <scope>NUCLEOTIDE SEQUENCE [LARGE SCALE GENOMIC DNA]</scope>
    <source>
        <strain>ATCC BAA-1158 / Py2</strain>
    </source>
</reference>
<gene>
    <name evidence="1" type="primary">aroC</name>
    <name type="ordered locus">Xaut_4138</name>
</gene>
<feature type="chain" id="PRO_1000115417" description="Chorismate synthase">
    <location>
        <begin position="1"/>
        <end position="370"/>
    </location>
</feature>
<feature type="binding site" evidence="1">
    <location>
        <position position="48"/>
    </location>
    <ligand>
        <name>NADP(+)</name>
        <dbReference type="ChEBI" id="CHEBI:58349"/>
    </ligand>
</feature>
<feature type="binding site" evidence="1">
    <location>
        <position position="54"/>
    </location>
    <ligand>
        <name>NADP(+)</name>
        <dbReference type="ChEBI" id="CHEBI:58349"/>
    </ligand>
</feature>
<feature type="binding site" evidence="1">
    <location>
        <begin position="130"/>
        <end position="132"/>
    </location>
    <ligand>
        <name>FMN</name>
        <dbReference type="ChEBI" id="CHEBI:58210"/>
    </ligand>
</feature>
<feature type="binding site" evidence="1">
    <location>
        <begin position="242"/>
        <end position="243"/>
    </location>
    <ligand>
        <name>FMN</name>
        <dbReference type="ChEBI" id="CHEBI:58210"/>
    </ligand>
</feature>
<feature type="binding site" evidence="1">
    <location>
        <position position="287"/>
    </location>
    <ligand>
        <name>FMN</name>
        <dbReference type="ChEBI" id="CHEBI:58210"/>
    </ligand>
</feature>
<feature type="binding site" evidence="1">
    <location>
        <begin position="302"/>
        <end position="306"/>
    </location>
    <ligand>
        <name>FMN</name>
        <dbReference type="ChEBI" id="CHEBI:58210"/>
    </ligand>
</feature>
<feature type="binding site" evidence="1">
    <location>
        <position position="328"/>
    </location>
    <ligand>
        <name>FMN</name>
        <dbReference type="ChEBI" id="CHEBI:58210"/>
    </ligand>
</feature>
<dbReference type="EC" id="4.2.3.5" evidence="1"/>
<dbReference type="EMBL" id="CP000781">
    <property type="protein sequence ID" value="ABS69360.1"/>
    <property type="molecule type" value="Genomic_DNA"/>
</dbReference>
<dbReference type="SMR" id="A7IMW7"/>
<dbReference type="STRING" id="78245.Xaut_4138"/>
<dbReference type="KEGG" id="xau:Xaut_4138"/>
<dbReference type="eggNOG" id="COG0082">
    <property type="taxonomic scope" value="Bacteria"/>
</dbReference>
<dbReference type="HOGENOM" id="CLU_034547_0_0_5"/>
<dbReference type="OrthoDB" id="9771806at2"/>
<dbReference type="PhylomeDB" id="A7IMW7"/>
<dbReference type="UniPathway" id="UPA00053">
    <property type="reaction ID" value="UER00090"/>
</dbReference>
<dbReference type="Proteomes" id="UP000002417">
    <property type="component" value="Chromosome"/>
</dbReference>
<dbReference type="GO" id="GO:0005829">
    <property type="term" value="C:cytosol"/>
    <property type="evidence" value="ECO:0007669"/>
    <property type="project" value="TreeGrafter"/>
</dbReference>
<dbReference type="GO" id="GO:0004107">
    <property type="term" value="F:chorismate synthase activity"/>
    <property type="evidence" value="ECO:0007669"/>
    <property type="project" value="UniProtKB-UniRule"/>
</dbReference>
<dbReference type="GO" id="GO:0010181">
    <property type="term" value="F:FMN binding"/>
    <property type="evidence" value="ECO:0007669"/>
    <property type="project" value="TreeGrafter"/>
</dbReference>
<dbReference type="GO" id="GO:0008652">
    <property type="term" value="P:amino acid biosynthetic process"/>
    <property type="evidence" value="ECO:0007669"/>
    <property type="project" value="UniProtKB-KW"/>
</dbReference>
<dbReference type="GO" id="GO:0009073">
    <property type="term" value="P:aromatic amino acid family biosynthetic process"/>
    <property type="evidence" value="ECO:0007669"/>
    <property type="project" value="UniProtKB-KW"/>
</dbReference>
<dbReference type="GO" id="GO:0009423">
    <property type="term" value="P:chorismate biosynthetic process"/>
    <property type="evidence" value="ECO:0007669"/>
    <property type="project" value="UniProtKB-UniRule"/>
</dbReference>
<dbReference type="CDD" id="cd07304">
    <property type="entry name" value="Chorismate_synthase"/>
    <property type="match status" value="1"/>
</dbReference>
<dbReference type="Gene3D" id="3.60.150.10">
    <property type="entry name" value="Chorismate synthase AroC"/>
    <property type="match status" value="1"/>
</dbReference>
<dbReference type="HAMAP" id="MF_00300">
    <property type="entry name" value="Chorismate_synth"/>
    <property type="match status" value="1"/>
</dbReference>
<dbReference type="InterPro" id="IPR000453">
    <property type="entry name" value="Chorismate_synth"/>
</dbReference>
<dbReference type="InterPro" id="IPR035904">
    <property type="entry name" value="Chorismate_synth_AroC_sf"/>
</dbReference>
<dbReference type="InterPro" id="IPR020541">
    <property type="entry name" value="Chorismate_synthase_CS"/>
</dbReference>
<dbReference type="NCBIfam" id="TIGR00033">
    <property type="entry name" value="aroC"/>
    <property type="match status" value="1"/>
</dbReference>
<dbReference type="NCBIfam" id="NF003793">
    <property type="entry name" value="PRK05382.1"/>
    <property type="match status" value="1"/>
</dbReference>
<dbReference type="PANTHER" id="PTHR21085">
    <property type="entry name" value="CHORISMATE SYNTHASE"/>
    <property type="match status" value="1"/>
</dbReference>
<dbReference type="PANTHER" id="PTHR21085:SF0">
    <property type="entry name" value="CHORISMATE SYNTHASE"/>
    <property type="match status" value="1"/>
</dbReference>
<dbReference type="Pfam" id="PF01264">
    <property type="entry name" value="Chorismate_synt"/>
    <property type="match status" value="1"/>
</dbReference>
<dbReference type="PIRSF" id="PIRSF001456">
    <property type="entry name" value="Chorismate_synth"/>
    <property type="match status" value="1"/>
</dbReference>
<dbReference type="SUPFAM" id="SSF103263">
    <property type="entry name" value="Chorismate synthase, AroC"/>
    <property type="match status" value="1"/>
</dbReference>
<dbReference type="PROSITE" id="PS00787">
    <property type="entry name" value="CHORISMATE_SYNTHASE_1"/>
    <property type="match status" value="1"/>
</dbReference>
<dbReference type="PROSITE" id="PS00788">
    <property type="entry name" value="CHORISMATE_SYNTHASE_2"/>
    <property type="match status" value="1"/>
</dbReference>
<dbReference type="PROSITE" id="PS00789">
    <property type="entry name" value="CHORISMATE_SYNTHASE_3"/>
    <property type="match status" value="1"/>
</dbReference>
<proteinExistence type="inferred from homology"/>